<feature type="signal peptide" evidence="9">
    <location>
        <begin position="1"/>
        <end position="20"/>
    </location>
</feature>
<feature type="chain" id="PRO_0000017522" description="Versican core protein">
    <location>
        <begin position="21"/>
        <end position="3396"/>
    </location>
</feature>
<feature type="domain" description="Ig-like V-type">
    <location>
        <begin position="21"/>
        <end position="146"/>
    </location>
</feature>
<feature type="domain" description="Link 1" evidence="7">
    <location>
        <begin position="150"/>
        <end position="245"/>
    </location>
</feature>
<feature type="domain" description="Link 2" evidence="7">
    <location>
        <begin position="251"/>
        <end position="347"/>
    </location>
</feature>
<feature type="domain" description="EGF-like 1" evidence="5">
    <location>
        <begin position="3089"/>
        <end position="3125"/>
    </location>
</feature>
<feature type="domain" description="EGF-like 2; calcium-binding" evidence="5">
    <location>
        <begin position="3127"/>
        <end position="3163"/>
    </location>
</feature>
<feature type="domain" description="C-type lectin" evidence="4">
    <location>
        <begin position="3176"/>
        <end position="3290"/>
    </location>
</feature>
<feature type="domain" description="Sushi" evidence="6">
    <location>
        <begin position="3294"/>
        <end position="3354"/>
    </location>
</feature>
<feature type="region of interest" description="GAG-alpha (glucosaminoglycan attachment domain)">
    <location>
        <begin position="348"/>
        <end position="1335"/>
    </location>
</feature>
<feature type="region of interest" description="Disordered" evidence="8">
    <location>
        <begin position="420"/>
        <end position="439"/>
    </location>
</feature>
<feature type="region of interest" description="Disordered" evidence="8">
    <location>
        <begin position="603"/>
        <end position="622"/>
    </location>
</feature>
<feature type="region of interest" description="Disordered" evidence="8">
    <location>
        <begin position="807"/>
        <end position="829"/>
    </location>
</feature>
<feature type="region of interest" description="Disordered" evidence="8">
    <location>
        <begin position="1126"/>
        <end position="1154"/>
    </location>
</feature>
<feature type="region of interest" description="Disordered" evidence="8">
    <location>
        <begin position="1277"/>
        <end position="1316"/>
    </location>
</feature>
<feature type="region of interest" description="GAG-beta">
    <location>
        <begin position="1336"/>
        <end position="3089"/>
    </location>
</feature>
<feature type="region of interest" description="Disordered" evidence="8">
    <location>
        <begin position="1420"/>
        <end position="1497"/>
    </location>
</feature>
<feature type="region of interest" description="Disordered" evidence="8">
    <location>
        <begin position="1510"/>
        <end position="1539"/>
    </location>
</feature>
<feature type="region of interest" description="Disordered" evidence="8">
    <location>
        <begin position="1717"/>
        <end position="1737"/>
    </location>
</feature>
<feature type="region of interest" description="Disordered" evidence="8">
    <location>
        <begin position="1759"/>
        <end position="1789"/>
    </location>
</feature>
<feature type="region of interest" description="Disordered" evidence="8">
    <location>
        <begin position="1962"/>
        <end position="1994"/>
    </location>
</feature>
<feature type="region of interest" description="Disordered" evidence="8">
    <location>
        <begin position="2107"/>
        <end position="2134"/>
    </location>
</feature>
<feature type="region of interest" description="Disordered" evidence="8">
    <location>
        <begin position="2168"/>
        <end position="2188"/>
    </location>
</feature>
<feature type="region of interest" description="Disordered" evidence="8">
    <location>
        <begin position="2371"/>
        <end position="2396"/>
    </location>
</feature>
<feature type="region of interest" description="Disordered" evidence="8">
    <location>
        <begin position="2445"/>
        <end position="2473"/>
    </location>
</feature>
<feature type="region of interest" description="Disordered" evidence="8">
    <location>
        <begin position="2493"/>
        <end position="2518"/>
    </location>
</feature>
<feature type="region of interest" description="Disordered" evidence="8">
    <location>
        <begin position="2598"/>
        <end position="2617"/>
    </location>
</feature>
<feature type="region of interest" description="Disordered" evidence="8">
    <location>
        <begin position="2834"/>
        <end position="2856"/>
    </location>
</feature>
<feature type="region of interest" description="Disordered" evidence="8">
    <location>
        <begin position="2881"/>
        <end position="2905"/>
    </location>
</feature>
<feature type="region of interest" description="Disordered" evidence="8">
    <location>
        <begin position="3371"/>
        <end position="3396"/>
    </location>
</feature>
<feature type="compositionally biased region" description="Polar residues" evidence="8">
    <location>
        <begin position="420"/>
        <end position="430"/>
    </location>
</feature>
<feature type="compositionally biased region" description="Polar residues" evidence="8">
    <location>
        <begin position="811"/>
        <end position="824"/>
    </location>
</feature>
<feature type="compositionally biased region" description="Low complexity" evidence="8">
    <location>
        <begin position="1143"/>
        <end position="1154"/>
    </location>
</feature>
<feature type="compositionally biased region" description="Basic and acidic residues" evidence="8">
    <location>
        <begin position="1422"/>
        <end position="1433"/>
    </location>
</feature>
<feature type="compositionally biased region" description="Low complexity" evidence="8">
    <location>
        <begin position="1469"/>
        <end position="1480"/>
    </location>
</feature>
<feature type="compositionally biased region" description="Basic and acidic residues" evidence="8">
    <location>
        <begin position="1517"/>
        <end position="1538"/>
    </location>
</feature>
<feature type="compositionally biased region" description="Basic and acidic residues" evidence="8">
    <location>
        <begin position="1720"/>
        <end position="1729"/>
    </location>
</feature>
<feature type="compositionally biased region" description="Polar residues" evidence="8">
    <location>
        <begin position="1760"/>
        <end position="1781"/>
    </location>
</feature>
<feature type="compositionally biased region" description="Low complexity" evidence="8">
    <location>
        <begin position="1969"/>
        <end position="1978"/>
    </location>
</feature>
<feature type="compositionally biased region" description="Acidic residues" evidence="8">
    <location>
        <begin position="2111"/>
        <end position="2120"/>
    </location>
</feature>
<feature type="compositionally biased region" description="Polar residues" evidence="8">
    <location>
        <begin position="2445"/>
        <end position="2461"/>
    </location>
</feature>
<feature type="compositionally biased region" description="Polar residues" evidence="8">
    <location>
        <begin position="2496"/>
        <end position="2513"/>
    </location>
</feature>
<feature type="compositionally biased region" description="Basic and acidic residues" evidence="8">
    <location>
        <begin position="2896"/>
        <end position="2905"/>
    </location>
</feature>
<feature type="compositionally biased region" description="Polar residues" evidence="8">
    <location>
        <begin position="3371"/>
        <end position="3380"/>
    </location>
</feature>
<feature type="site" description="Cleavage; by ADAMTS15" evidence="2">
    <location>
        <begin position="1428"/>
        <end position="1429"/>
    </location>
</feature>
<feature type="modified residue" description="Phosphoserine; by FAM20C" evidence="14 27">
    <location>
        <position position="2116"/>
    </location>
</feature>
<feature type="modified residue" description="Phosphoserine" evidence="2">
    <location>
        <position position="2608"/>
    </location>
</feature>
<feature type="modified residue" description="Phosphothreonine" evidence="27">
    <location>
        <position position="2617"/>
    </location>
</feature>
<feature type="glycosylation site" description="N-linked (GlcNAc...) asparagine" evidence="3">
    <location>
        <position position="57"/>
    </location>
</feature>
<feature type="glycosylation site" description="N-linked (GlcNAc...) asparagine" evidence="3">
    <location>
        <position position="330"/>
    </location>
</feature>
<feature type="glycosylation site" description="N-linked (GlcNAc...) asparagine" evidence="3">
    <location>
        <position position="615"/>
    </location>
</feature>
<feature type="glycosylation site" description="O-linked (Xyl...) (chondroitin sulfate) serine" evidence="16">
    <location>
        <position position="659"/>
    </location>
</feature>
<feature type="glycosylation site" description="N-linked (GlcNAc...) asparagine" evidence="3">
    <location>
        <position position="782"/>
    </location>
</feature>
<feature type="glycosylation site" description="N-linked (GlcNAc...) asparagine" evidence="3">
    <location>
        <position position="809"/>
    </location>
</feature>
<feature type="glycosylation site" description="N-linked (GlcNAc...) asparagine" evidence="3">
    <location>
        <position position="1332"/>
    </location>
</feature>
<feature type="glycosylation site" description="N-linked (GlcNAc...) asparagine" evidence="3">
    <location>
        <position position="1398"/>
    </location>
</feature>
<feature type="glycosylation site" description="N-linked (GlcNAc...) asparagine" evidence="3">
    <location>
        <position position="1442"/>
    </location>
</feature>
<feature type="glycosylation site" description="N-linked (GlcNAc...) asparagine" evidence="3">
    <location>
        <position position="1468"/>
    </location>
</feature>
<feature type="glycosylation site" description="O-linked (Xyl...) (chondroitin sulfate) serine" evidence="13 16 17">
    <location>
        <position position="1548"/>
    </location>
</feature>
<feature type="glycosylation site" description="O-linked (Xyl...) (chondroitin sulfate) serine" evidence="16 17">
    <location>
        <position position="1631"/>
    </location>
</feature>
<feature type="glycosylation site" description="N-linked (GlcNAc...) asparagine" evidence="3">
    <location>
        <position position="1663"/>
    </location>
</feature>
<feature type="glycosylation site" description="N-linked (GlcNAc...) asparagine" evidence="3">
    <location>
        <position position="1898"/>
    </location>
</feature>
<feature type="glycosylation site" description="O-linked (Xyl...) (chondroitin sulfate) serine" evidence="17">
    <location>
        <position position="1935"/>
    </location>
</feature>
<feature type="glycosylation site" description="O-linked (Xyl...) (chondroitin sulfate) serine" evidence="16 17">
    <location>
        <position position="1959"/>
    </location>
</feature>
<feature type="glycosylation site" description="N-linked (GlcNAc...) asparagine" evidence="3">
    <location>
        <position position="2179"/>
    </location>
</feature>
<feature type="glycosylation site" description="O-linked (Xyl...) (chondroitin sulfate) serine" evidence="16">
    <location>
        <position position="2247"/>
    </location>
</feature>
<feature type="glycosylation site" description="O-linked (Xyl...) (chondroitin sulfate) serine" evidence="17">
    <location>
        <position position="2254"/>
    </location>
</feature>
<feature type="glycosylation site" description="N-linked (GlcNAc...) asparagine" evidence="3">
    <location>
        <position position="2272"/>
    </location>
</feature>
<feature type="glycosylation site" description="N-linked (GlcNAc...) asparagine" evidence="3">
    <location>
        <position position="2280"/>
    </location>
</feature>
<feature type="glycosylation site" description="N-linked (GlcNAc...) asparagine" evidence="3">
    <location>
        <position position="2360"/>
    </location>
</feature>
<feature type="glycosylation site" description="N-linked (GlcNAc...) asparagine" evidence="3">
    <location>
        <position position="2385"/>
    </location>
</feature>
<feature type="glycosylation site" description="N-linked (GlcNAc...) asparagine" evidence="3">
    <location>
        <position position="2392"/>
    </location>
</feature>
<feature type="glycosylation site" description="N-linked (GlcNAc...) asparagine" evidence="3">
    <location>
        <position position="2496"/>
    </location>
</feature>
<feature type="glycosylation site" description="N-linked (GlcNAc...) asparagine" evidence="3">
    <location>
        <position position="2628"/>
    </location>
</feature>
<feature type="glycosylation site" description="O-linked (Xyl...) (chondroitin sulfate) serine" evidence="3">
    <location>
        <position position="2722"/>
    </location>
</feature>
<feature type="glycosylation site" description="O-linked (Xyl...) (chondroitin sulfate) serine" evidence="17">
    <location>
        <position position="2723"/>
    </location>
</feature>
<feature type="glycosylation site" description="O-linked (Xyl...) (chondroitin sulfate) serine" evidence="16">
    <location>
        <position position="2767"/>
    </location>
</feature>
<feature type="glycosylation site" description="N-linked (GlcNAc...) asparagine" evidence="3">
    <location>
        <position position="2934"/>
    </location>
</feature>
<feature type="glycosylation site" description="O-linked (Xyl...) (chondroitin sulfate) serine" evidence="17">
    <location>
        <position position="2941"/>
    </location>
</feature>
<feature type="glycosylation site" description="N-linked (GlcNAc...) asparagine" evidence="3">
    <location>
        <position position="3067"/>
    </location>
</feature>
<feature type="glycosylation site" description="N-linked (GlcNAc...) asparagine" evidence="3">
    <location>
        <position position="3369"/>
    </location>
</feature>
<feature type="glycosylation site" description="N-linked (GlcNAc...) asparagine" evidence="3">
    <location>
        <position position="3379"/>
    </location>
</feature>
<feature type="disulfide bond" evidence="1">
    <location>
        <begin position="44"/>
        <end position="130"/>
    </location>
</feature>
<feature type="disulfide bond" evidence="1">
    <location>
        <begin position="172"/>
        <end position="243"/>
    </location>
</feature>
<feature type="disulfide bond" evidence="1">
    <location>
        <begin position="196"/>
        <end position="217"/>
    </location>
</feature>
<feature type="disulfide bond" evidence="1">
    <location>
        <begin position="270"/>
        <end position="345"/>
    </location>
</feature>
<feature type="disulfide bond" evidence="1">
    <location>
        <begin position="294"/>
        <end position="315"/>
    </location>
</feature>
<feature type="disulfide bond" evidence="1">
    <location>
        <begin position="3093"/>
        <end position="3104"/>
    </location>
</feature>
<feature type="disulfide bond" evidence="1">
    <location>
        <begin position="3098"/>
        <end position="3113"/>
    </location>
</feature>
<feature type="disulfide bond" evidence="1">
    <location>
        <begin position="3115"/>
        <end position="3124"/>
    </location>
</feature>
<feature type="disulfide bond" evidence="1">
    <location>
        <begin position="3131"/>
        <end position="3142"/>
    </location>
</feature>
<feature type="disulfide bond" evidence="1">
    <location>
        <begin position="3136"/>
        <end position="3151"/>
    </location>
</feature>
<feature type="disulfide bond" evidence="1">
    <location>
        <begin position="3153"/>
        <end position="3162"/>
    </location>
</feature>
<feature type="disulfide bond" evidence="1">
    <location>
        <begin position="3169"/>
        <end position="3180"/>
    </location>
</feature>
<feature type="disulfide bond" evidence="1">
    <location>
        <begin position="3197"/>
        <end position="3289"/>
    </location>
</feature>
<feature type="disulfide bond" evidence="1">
    <location>
        <begin position="3265"/>
        <end position="3281"/>
    </location>
</feature>
<feature type="disulfide bond" evidence="1">
    <location>
        <begin position="3296"/>
        <end position="3339"/>
    </location>
</feature>
<feature type="disulfide bond" evidence="1">
    <location>
        <begin position="3325"/>
        <end position="3352"/>
    </location>
</feature>
<feature type="splice variant" id="VSP_003082" description="In isoform V1 and isoform V3." evidence="21 23 24">
    <original>P</original>
    <variation>R</variation>
    <location>
        <position position="348"/>
    </location>
</feature>
<feature type="splice variant" id="VSP_003085" description="In isoform V3." evidence="23">
    <location>
        <begin position="349"/>
        <end position="3089"/>
    </location>
</feature>
<feature type="splice variant" id="VSP_003083" description="In isoform V1." evidence="21 24">
    <location>
        <begin position="349"/>
        <end position="1335"/>
    </location>
</feature>
<feature type="splice variant" id="VSP_003084" description="In isoform V2." evidence="22">
    <location>
        <begin position="1336"/>
        <end position="3089"/>
    </location>
</feature>
<feature type="splice variant" id="VSP_003086" description="In isoform Vint." evidence="20">
    <original>PSAYQRTYSMKYFKNSSSAKDNSINTSKHDHRWSRRWQESRR</original>
    <variation>RKWSFRKNGLPCYNNY</variation>
    <location>
        <begin position="3355"/>
        <end position="3396"/>
    </location>
</feature>
<feature type="sequence variant" id="VAR_021958" description="In dbSNP:rs2652098.">
    <original>S</original>
    <variation>L</variation>
    <location>
        <position position="300"/>
    </location>
</feature>
<feature type="sequence variant" id="VAR_020214" description="In dbSNP:rs2287926.">
    <original>G</original>
    <variation>D</variation>
    <location>
        <position position="428"/>
    </location>
</feature>
<feature type="sequence variant" id="VAR_021959" description="In dbSNP:rs309559.">
    <original>K</original>
    <variation>R</variation>
    <location>
        <position position="1516"/>
    </location>
</feature>
<feature type="sequence variant" id="VAR_031632" description="In dbSNP:rs188703.">
    <original>R</original>
    <variation>H</variation>
    <location>
        <position position="1826"/>
    </location>
</feature>
<feature type="sequence variant" id="VAR_020215" description="In dbSNP:rs160278.">
    <original>F</original>
    <variation>Y</variation>
    <location>
        <position position="2301"/>
    </location>
</feature>
<feature type="sequence variant" id="VAR_020216" description="In dbSNP:rs3734094.">
    <original>V</original>
    <variation>L</variation>
    <location>
        <position position="2315"/>
    </location>
</feature>
<feature type="sequence variant" id="VAR_021960" description="In dbSNP:rs160277.">
    <original>D</original>
    <variation>Y</variation>
    <location>
        <position position="2937"/>
    </location>
</feature>
<feature type="sequence variant" id="VAR_031633" description="In dbSNP:rs16900532.">
    <original>N</original>
    <variation>K</variation>
    <location>
        <position position="3011"/>
    </location>
</feature>
<feature type="sequence conflict" description="In Ref. 10; AA sequence." evidence="25" ref="10">
    <original>N</original>
    <variation>D</variation>
    <location>
        <position position="88"/>
    </location>
</feature>
<feature type="sequence conflict" description="In Ref. 10; AA sequence." evidence="25" ref="10">
    <original>K</original>
    <variation>I</variation>
    <location>
        <position position="260"/>
    </location>
</feature>
<feature type="sequence conflict" description="In Ref. 4; BAA06801." evidence="25" ref="4">
    <original>D</original>
    <variation>A</variation>
    <location>
        <position position="274"/>
    </location>
</feature>
<feature type="sequence conflict" description="In Ref. 10; AA sequence." evidence="25" ref="10">
    <original>Q</original>
    <variation>G</variation>
    <location>
        <position position="284"/>
    </location>
</feature>
<feature type="sequence conflict" description="In Ref. 7; AAA36437." evidence="25" ref="7">
    <original>IKAEA</original>
    <variation>EFREV</variation>
    <location>
        <begin position="2709"/>
        <end position="2713"/>
    </location>
</feature>
<evidence type="ECO:0000250" key="1"/>
<evidence type="ECO:0000250" key="2">
    <source>
        <dbReference type="UniProtKB" id="Q62059"/>
    </source>
</evidence>
<evidence type="ECO:0000255" key="3"/>
<evidence type="ECO:0000255" key="4">
    <source>
        <dbReference type="PROSITE-ProRule" id="PRU00040"/>
    </source>
</evidence>
<evidence type="ECO:0000255" key="5">
    <source>
        <dbReference type="PROSITE-ProRule" id="PRU00076"/>
    </source>
</evidence>
<evidence type="ECO:0000255" key="6">
    <source>
        <dbReference type="PROSITE-ProRule" id="PRU00302"/>
    </source>
</evidence>
<evidence type="ECO:0000255" key="7">
    <source>
        <dbReference type="PROSITE-ProRule" id="PRU00323"/>
    </source>
</evidence>
<evidence type="ECO:0000256" key="8">
    <source>
        <dbReference type="SAM" id="MobiDB-lite"/>
    </source>
</evidence>
<evidence type="ECO:0000269" key="9">
    <source>
    </source>
</evidence>
<evidence type="ECO:0000269" key="10">
    <source>
    </source>
</evidence>
<evidence type="ECO:0000269" key="11">
    <source>
    </source>
</evidence>
<evidence type="ECO:0000269" key="12">
    <source>
    </source>
</evidence>
<evidence type="ECO:0000269" key="13">
    <source>
    </source>
</evidence>
<evidence type="ECO:0000269" key="14">
    <source>
    </source>
</evidence>
<evidence type="ECO:0000269" key="15">
    <source>
    </source>
</evidence>
<evidence type="ECO:0000269" key="16">
    <source>
    </source>
</evidence>
<evidence type="ECO:0000269" key="17">
    <source>
    </source>
</evidence>
<evidence type="ECO:0000269" key="18">
    <source>
    </source>
</evidence>
<evidence type="ECO:0000269" key="19">
    <source>
    </source>
</evidence>
<evidence type="ECO:0000303" key="20">
    <source>
    </source>
</evidence>
<evidence type="ECO:0000303" key="21">
    <source>
    </source>
</evidence>
<evidence type="ECO:0000303" key="22">
    <source>
    </source>
</evidence>
<evidence type="ECO:0000303" key="23">
    <source>
    </source>
</evidence>
<evidence type="ECO:0000303" key="24">
    <source>
    </source>
</evidence>
<evidence type="ECO:0000305" key="25"/>
<evidence type="ECO:0000305" key="26">
    <source>
    </source>
</evidence>
<evidence type="ECO:0007744" key="27">
    <source>
    </source>
</evidence>
<name>CSPG2_HUMAN</name>
<dbReference type="EMBL" id="X15998">
    <property type="protein sequence ID" value="CAA34128.1"/>
    <property type="molecule type" value="mRNA"/>
</dbReference>
<dbReference type="EMBL" id="U16306">
    <property type="protein sequence ID" value="AAA65018.1"/>
    <property type="molecule type" value="mRNA"/>
</dbReference>
<dbReference type="EMBL" id="U26555">
    <property type="protein sequence ID" value="AAA67565.1"/>
    <property type="molecule type" value="mRNA"/>
</dbReference>
<dbReference type="EMBL" id="D32039">
    <property type="protein sequence ID" value="BAA06801.1"/>
    <property type="molecule type" value="mRNA"/>
</dbReference>
<dbReference type="EMBL" id="S52488">
    <property type="protein sequence ID" value="AAB24878.1"/>
    <property type="molecule type" value="Genomic_DNA"/>
</dbReference>
<dbReference type="EMBL" id="J02814">
    <property type="protein sequence ID" value="AAA36437.1"/>
    <property type="molecule type" value="mRNA"/>
</dbReference>
<dbReference type="EMBL" id="AF084545">
    <property type="protein sequence ID" value="AAD48545.1"/>
    <property type="molecule type" value="mRNA"/>
</dbReference>
<dbReference type="CCDS" id="CCDS4060.1">
    <molecule id="P13611-1"/>
</dbReference>
<dbReference type="CCDS" id="CCDS47242.1">
    <molecule id="P13611-4"/>
</dbReference>
<dbReference type="CCDS" id="CCDS54875.1">
    <molecule id="P13611-3"/>
</dbReference>
<dbReference type="CCDS" id="CCDS54876.1">
    <molecule id="P13611-2"/>
</dbReference>
<dbReference type="PIR" id="S06014">
    <property type="entry name" value="A60979"/>
</dbReference>
<dbReference type="RefSeq" id="NP_001119808.1">
    <molecule id="P13611-4"/>
    <property type="nucleotide sequence ID" value="NM_001126336.3"/>
</dbReference>
<dbReference type="RefSeq" id="NP_001157569.1">
    <molecule id="P13611-2"/>
    <property type="nucleotide sequence ID" value="NM_001164097.2"/>
</dbReference>
<dbReference type="RefSeq" id="NP_001157570.1">
    <molecule id="P13611-3"/>
    <property type="nucleotide sequence ID" value="NM_001164098.2"/>
</dbReference>
<dbReference type="RefSeq" id="NP_004376.2">
    <molecule id="P13611-1"/>
    <property type="nucleotide sequence ID" value="NM_004385.4"/>
</dbReference>
<dbReference type="SMR" id="P13611"/>
<dbReference type="BioGRID" id="107844">
    <property type="interactions" value="54"/>
</dbReference>
<dbReference type="FunCoup" id="P13611">
    <property type="interactions" value="227"/>
</dbReference>
<dbReference type="IntAct" id="P13611">
    <property type="interactions" value="27"/>
</dbReference>
<dbReference type="MINT" id="P13611"/>
<dbReference type="STRING" id="9606.ENSP00000265077"/>
<dbReference type="DrugBank" id="DB08818">
    <property type="generic name" value="Hyaluronic acid"/>
</dbReference>
<dbReference type="CarbonylDB" id="P13611"/>
<dbReference type="GlyConnect" id="1890">
    <property type="glycosylation" value="14 N-Linked glycans (9 sites), 1 O-Linked glycan (1 site)"/>
</dbReference>
<dbReference type="GlyCosmos" id="P13611">
    <property type="glycosylation" value="191 sites, 23 glycans"/>
</dbReference>
<dbReference type="GlyGen" id="P13611">
    <property type="glycosylation" value="277 sites, 80 N-linked glycans (12 sites), 11 O-linked glycans (242 sites)"/>
</dbReference>
<dbReference type="iPTMnet" id="P13611"/>
<dbReference type="PhosphoSitePlus" id="P13611"/>
<dbReference type="SwissPalm" id="P13611"/>
<dbReference type="BioMuta" id="VCAN"/>
<dbReference type="DMDM" id="2506816"/>
<dbReference type="CPTAC" id="CPTAC-5841"/>
<dbReference type="CPTAC" id="CPTAC-5866"/>
<dbReference type="jPOST" id="P13611"/>
<dbReference type="MassIVE" id="P13611"/>
<dbReference type="PaxDb" id="9606-ENSP00000265077"/>
<dbReference type="PeptideAtlas" id="P13611"/>
<dbReference type="ProteomicsDB" id="52938">
    <molecule id="P13611-1"/>
</dbReference>
<dbReference type="ProteomicsDB" id="52939">
    <molecule id="P13611-2"/>
</dbReference>
<dbReference type="ProteomicsDB" id="52940">
    <molecule id="P13611-3"/>
</dbReference>
<dbReference type="ProteomicsDB" id="52941">
    <molecule id="P13611-4"/>
</dbReference>
<dbReference type="ProteomicsDB" id="52942">
    <molecule id="P13611-5"/>
</dbReference>
<dbReference type="Pumba" id="P13611"/>
<dbReference type="Antibodypedia" id="1346">
    <property type="antibodies" value="328 antibodies from 31 providers"/>
</dbReference>
<dbReference type="DNASU" id="1462"/>
<dbReference type="Ensembl" id="ENST00000265077.8">
    <molecule id="P13611-1"/>
    <property type="protein sequence ID" value="ENSP00000265077.3"/>
    <property type="gene ID" value="ENSG00000038427.16"/>
</dbReference>
<dbReference type="Ensembl" id="ENST00000342785.8">
    <molecule id="P13611-3"/>
    <property type="protein sequence ID" value="ENSP00000342768.4"/>
    <property type="gene ID" value="ENSG00000038427.16"/>
</dbReference>
<dbReference type="Ensembl" id="ENST00000343200.9">
    <molecule id="P13611-2"/>
    <property type="protein sequence ID" value="ENSP00000340062.5"/>
    <property type="gene ID" value="ENSG00000038427.16"/>
</dbReference>
<dbReference type="Ensembl" id="ENST00000502527.2">
    <molecule id="P13611-4"/>
    <property type="protein sequence ID" value="ENSP00000421362.2"/>
    <property type="gene ID" value="ENSG00000038427.16"/>
</dbReference>
<dbReference type="GeneID" id="1462"/>
<dbReference type="KEGG" id="hsa:1462"/>
<dbReference type="MANE-Select" id="ENST00000265077.8">
    <property type="protein sequence ID" value="ENSP00000265077.3"/>
    <property type="RefSeq nucleotide sequence ID" value="NM_004385.5"/>
    <property type="RefSeq protein sequence ID" value="NP_004376.2"/>
</dbReference>
<dbReference type="UCSC" id="uc003kii.4">
    <molecule id="P13611-1"/>
    <property type="organism name" value="human"/>
</dbReference>
<dbReference type="AGR" id="HGNC:2464"/>
<dbReference type="CTD" id="1462"/>
<dbReference type="DisGeNET" id="1462"/>
<dbReference type="GeneCards" id="VCAN"/>
<dbReference type="HGNC" id="HGNC:2464">
    <property type="gene designation" value="VCAN"/>
</dbReference>
<dbReference type="HPA" id="ENSG00000038427">
    <property type="expression patterns" value="Tissue enhanced (lymphoid tissue, placenta)"/>
</dbReference>
<dbReference type="MalaCards" id="VCAN"/>
<dbReference type="MIM" id="118661">
    <property type="type" value="gene"/>
</dbReference>
<dbReference type="MIM" id="143200">
    <property type="type" value="phenotype"/>
</dbReference>
<dbReference type="neXtProt" id="NX_P13611"/>
<dbReference type="OpenTargets" id="ENSG00000038427"/>
<dbReference type="Orphanet" id="898">
    <property type="disease" value="Wagner disease"/>
</dbReference>
<dbReference type="PharmGKB" id="PA162408788"/>
<dbReference type="VEuPathDB" id="HostDB:ENSG00000038427"/>
<dbReference type="eggNOG" id="ENOG502QRBE">
    <property type="taxonomic scope" value="Eukaryota"/>
</dbReference>
<dbReference type="GeneTree" id="ENSGT00940000156102"/>
<dbReference type="HOGENOM" id="CLU_000303_1_1_1"/>
<dbReference type="InParanoid" id="P13611"/>
<dbReference type="OMA" id="TQTEKHE"/>
<dbReference type="OrthoDB" id="9905227at2759"/>
<dbReference type="PAN-GO" id="P13611">
    <property type="GO annotations" value="3 GO annotations based on evolutionary models"/>
</dbReference>
<dbReference type="PhylomeDB" id="P13611"/>
<dbReference type="TreeFam" id="TF332134"/>
<dbReference type="PathwayCommons" id="P13611"/>
<dbReference type="Reactome" id="R-HSA-1971475">
    <property type="pathway name" value="A tetrasaccharide linker sequence is required for GAG synthesis"/>
</dbReference>
<dbReference type="Reactome" id="R-HSA-2022870">
    <property type="pathway name" value="Chondroitin sulfate biosynthesis"/>
</dbReference>
<dbReference type="Reactome" id="R-HSA-2022923">
    <property type="pathway name" value="Dermatan sulfate biosynthesis"/>
</dbReference>
<dbReference type="Reactome" id="R-HSA-2024101">
    <property type="pathway name" value="CS/DS degradation"/>
</dbReference>
<dbReference type="Reactome" id="R-HSA-3000178">
    <property type="pathway name" value="ECM proteoglycans"/>
</dbReference>
<dbReference type="Reactome" id="R-HSA-3560783">
    <property type="pathway name" value="Defective B4GALT7 causes EDS, progeroid type"/>
</dbReference>
<dbReference type="Reactome" id="R-HSA-3560801">
    <property type="pathway name" value="Defective B3GAT3 causes JDSSDHD"/>
</dbReference>
<dbReference type="Reactome" id="R-HSA-3595172">
    <property type="pathway name" value="Defective CHST3 causes SEDCJD"/>
</dbReference>
<dbReference type="Reactome" id="R-HSA-3595174">
    <property type="pathway name" value="Defective CHST14 causes EDS, musculocontractural type"/>
</dbReference>
<dbReference type="Reactome" id="R-HSA-3595177">
    <property type="pathway name" value="Defective CHSY1 causes TPBS"/>
</dbReference>
<dbReference type="Reactome" id="R-HSA-381426">
    <property type="pathway name" value="Regulation of Insulin-like Growth Factor (IGF) transport and uptake by Insulin-like Growth Factor Binding Proteins (IGFBPs)"/>
</dbReference>
<dbReference type="Reactome" id="R-HSA-4420332">
    <property type="pathway name" value="Defective B3GALT6 causes EDSP2 and SEMDJL1"/>
</dbReference>
<dbReference type="Reactome" id="R-HSA-8957275">
    <property type="pathway name" value="Post-translational protein phosphorylation"/>
</dbReference>
<dbReference type="SignaLink" id="P13611"/>
<dbReference type="SIGNOR" id="P13611"/>
<dbReference type="BioGRID-ORCS" id="1462">
    <property type="hits" value="8 hits in 1144 CRISPR screens"/>
</dbReference>
<dbReference type="CD-CODE" id="FB4E32DD">
    <property type="entry name" value="Presynaptic clusters and postsynaptic densities"/>
</dbReference>
<dbReference type="ChiTaRS" id="VCAN">
    <property type="organism name" value="human"/>
</dbReference>
<dbReference type="GeneWiki" id="Versican"/>
<dbReference type="GenomeRNAi" id="1462"/>
<dbReference type="Pharos" id="P13611">
    <property type="development level" value="Tbio"/>
</dbReference>
<dbReference type="PRO" id="PR:P13611"/>
<dbReference type="Proteomes" id="UP000005640">
    <property type="component" value="Chromosome 5"/>
</dbReference>
<dbReference type="RNAct" id="P13611">
    <property type="molecule type" value="protein"/>
</dbReference>
<dbReference type="Bgee" id="ENSG00000038427">
    <property type="expression patterns" value="Expressed in monocyte and 208 other cell types or tissues"/>
</dbReference>
<dbReference type="ExpressionAtlas" id="P13611">
    <property type="expression patterns" value="baseline and differential"/>
</dbReference>
<dbReference type="GO" id="GO:0062023">
    <property type="term" value="C:collagen-containing extracellular matrix"/>
    <property type="evidence" value="ECO:0007005"/>
    <property type="project" value="UniProtKB"/>
</dbReference>
<dbReference type="GO" id="GO:0005788">
    <property type="term" value="C:endoplasmic reticulum lumen"/>
    <property type="evidence" value="ECO:0000304"/>
    <property type="project" value="Reactome"/>
</dbReference>
<dbReference type="GO" id="GO:0031012">
    <property type="term" value="C:extracellular matrix"/>
    <property type="evidence" value="ECO:0000304"/>
    <property type="project" value="ProtInc"/>
</dbReference>
<dbReference type="GO" id="GO:0005576">
    <property type="term" value="C:extracellular region"/>
    <property type="evidence" value="ECO:0000314"/>
    <property type="project" value="UniProtKB"/>
</dbReference>
<dbReference type="GO" id="GO:0005615">
    <property type="term" value="C:extracellular space"/>
    <property type="evidence" value="ECO:0007005"/>
    <property type="project" value="BHF-UCL"/>
</dbReference>
<dbReference type="GO" id="GO:0005796">
    <property type="term" value="C:Golgi lumen"/>
    <property type="evidence" value="ECO:0000304"/>
    <property type="project" value="Reactome"/>
</dbReference>
<dbReference type="GO" id="GO:0033165">
    <property type="term" value="C:interphotoreceptor matrix"/>
    <property type="evidence" value="ECO:0007669"/>
    <property type="project" value="UniProtKB-SubCell"/>
</dbReference>
<dbReference type="GO" id="GO:0043202">
    <property type="term" value="C:lysosomal lumen"/>
    <property type="evidence" value="ECO:0000304"/>
    <property type="project" value="Reactome"/>
</dbReference>
<dbReference type="GO" id="GO:0016020">
    <property type="term" value="C:membrane"/>
    <property type="evidence" value="ECO:0007005"/>
    <property type="project" value="UniProtKB"/>
</dbReference>
<dbReference type="GO" id="GO:0072534">
    <property type="term" value="C:perineuronal net"/>
    <property type="evidence" value="ECO:0000318"/>
    <property type="project" value="GO_Central"/>
</dbReference>
<dbReference type="GO" id="GO:0001750">
    <property type="term" value="C:photoreceptor outer segment"/>
    <property type="evidence" value="ECO:0007669"/>
    <property type="project" value="UniProtKB-SubCell"/>
</dbReference>
<dbReference type="GO" id="GO:0045202">
    <property type="term" value="C:synapse"/>
    <property type="evidence" value="ECO:0000318"/>
    <property type="project" value="GO_Central"/>
</dbReference>
<dbReference type="GO" id="GO:0005509">
    <property type="term" value="F:calcium ion binding"/>
    <property type="evidence" value="ECO:0007669"/>
    <property type="project" value="InterPro"/>
</dbReference>
<dbReference type="GO" id="GO:0030246">
    <property type="term" value="F:carbohydrate binding"/>
    <property type="evidence" value="ECO:0007669"/>
    <property type="project" value="UniProtKB-KW"/>
</dbReference>
<dbReference type="GO" id="GO:0030021">
    <property type="term" value="F:extracellular matrix structural constituent conferring compression resistance"/>
    <property type="evidence" value="ECO:0000250"/>
    <property type="project" value="BHF-UCL"/>
</dbReference>
<dbReference type="GO" id="GO:0005539">
    <property type="term" value="F:glycosaminoglycan binding"/>
    <property type="evidence" value="ECO:0000304"/>
    <property type="project" value="ProtInc"/>
</dbReference>
<dbReference type="GO" id="GO:0005540">
    <property type="term" value="F:hyaluronic acid binding"/>
    <property type="evidence" value="ECO:0000304"/>
    <property type="project" value="ProtInc"/>
</dbReference>
<dbReference type="GO" id="GO:0008160">
    <property type="term" value="F:protein tyrosine phosphatase activator activity"/>
    <property type="evidence" value="ECO:0000314"/>
    <property type="project" value="MGI"/>
</dbReference>
<dbReference type="GO" id="GO:0007155">
    <property type="term" value="P:cell adhesion"/>
    <property type="evidence" value="ECO:0000304"/>
    <property type="project" value="ProtInc"/>
</dbReference>
<dbReference type="GO" id="GO:0008037">
    <property type="term" value="P:cell recognition"/>
    <property type="evidence" value="ECO:0000304"/>
    <property type="project" value="ProtInc"/>
</dbReference>
<dbReference type="GO" id="GO:0007417">
    <property type="term" value="P:central nervous system development"/>
    <property type="evidence" value="ECO:0000318"/>
    <property type="project" value="GO_Central"/>
</dbReference>
<dbReference type="GO" id="GO:0008347">
    <property type="term" value="P:glial cell migration"/>
    <property type="evidence" value="ECO:0000314"/>
    <property type="project" value="BHF-UCL"/>
</dbReference>
<dbReference type="GO" id="GO:0001649">
    <property type="term" value="P:osteoblast differentiation"/>
    <property type="evidence" value="ECO:0007005"/>
    <property type="project" value="UniProtKB"/>
</dbReference>
<dbReference type="GO" id="GO:0001501">
    <property type="term" value="P:skeletal system development"/>
    <property type="evidence" value="ECO:0000318"/>
    <property type="project" value="GO_Central"/>
</dbReference>
<dbReference type="CDD" id="cd00033">
    <property type="entry name" value="CCP"/>
    <property type="match status" value="1"/>
</dbReference>
<dbReference type="CDD" id="cd03588">
    <property type="entry name" value="CLECT_CSPGs"/>
    <property type="match status" value="1"/>
</dbReference>
<dbReference type="CDD" id="cd00054">
    <property type="entry name" value="EGF_CA"/>
    <property type="match status" value="2"/>
</dbReference>
<dbReference type="CDD" id="cd05901">
    <property type="entry name" value="Ig_Versican"/>
    <property type="match status" value="1"/>
</dbReference>
<dbReference type="CDD" id="cd03517">
    <property type="entry name" value="Link_domain_CSPGs_modules_1_3"/>
    <property type="match status" value="1"/>
</dbReference>
<dbReference type="CDD" id="cd03520">
    <property type="entry name" value="Link_domain_CSPGs_modules_2_4"/>
    <property type="match status" value="1"/>
</dbReference>
<dbReference type="FunFam" id="3.10.100.10:FF:000011">
    <property type="entry name" value="Aggrecan core protein"/>
    <property type="match status" value="1"/>
</dbReference>
<dbReference type="FunFam" id="3.10.100.10:FF:000002">
    <property type="entry name" value="Hyaluronan proteoglycan link protein 1"/>
    <property type="match status" value="1"/>
</dbReference>
<dbReference type="FunFam" id="2.10.70.10:FF:000003">
    <property type="entry name" value="Versican core protein"/>
    <property type="match status" value="1"/>
</dbReference>
<dbReference type="FunFam" id="3.10.100.10:FF:000003">
    <property type="entry name" value="Versican core protein"/>
    <property type="match status" value="1"/>
</dbReference>
<dbReference type="FunFam" id="2.10.25.10:FF:000527">
    <property type="entry name" value="versican core protein isoform X2"/>
    <property type="match status" value="1"/>
</dbReference>
<dbReference type="FunFam" id="2.60.40.10:FF:000361">
    <property type="entry name" value="versican core protein-like"/>
    <property type="match status" value="1"/>
</dbReference>
<dbReference type="FunFam" id="2.10.25.10:FF:000006">
    <property type="entry name" value="Versican core protein-like isoform 1"/>
    <property type="match status" value="1"/>
</dbReference>
<dbReference type="Gene3D" id="2.10.70.10">
    <property type="entry name" value="Complement Module, domain 1"/>
    <property type="match status" value="1"/>
</dbReference>
<dbReference type="Gene3D" id="2.60.40.10">
    <property type="entry name" value="Immunoglobulins"/>
    <property type="match status" value="1"/>
</dbReference>
<dbReference type="Gene3D" id="2.10.25.10">
    <property type="entry name" value="Laminin"/>
    <property type="match status" value="2"/>
</dbReference>
<dbReference type="Gene3D" id="3.10.100.10">
    <property type="entry name" value="Mannose-Binding Protein A, subunit A"/>
    <property type="match status" value="3"/>
</dbReference>
<dbReference type="InterPro" id="IPR001304">
    <property type="entry name" value="C-type_lectin-like"/>
</dbReference>
<dbReference type="InterPro" id="IPR016186">
    <property type="entry name" value="C-type_lectin-like/link_sf"/>
</dbReference>
<dbReference type="InterPro" id="IPR018378">
    <property type="entry name" value="C-type_lectin_CS"/>
</dbReference>
<dbReference type="InterPro" id="IPR033987">
    <property type="entry name" value="CSPG_CTLD"/>
</dbReference>
<dbReference type="InterPro" id="IPR016187">
    <property type="entry name" value="CTDL_fold"/>
</dbReference>
<dbReference type="InterPro" id="IPR001881">
    <property type="entry name" value="EGF-like_Ca-bd_dom"/>
</dbReference>
<dbReference type="InterPro" id="IPR000742">
    <property type="entry name" value="EGF-like_dom"/>
</dbReference>
<dbReference type="InterPro" id="IPR000152">
    <property type="entry name" value="EGF-type_Asp/Asn_hydroxyl_site"/>
</dbReference>
<dbReference type="InterPro" id="IPR018097">
    <property type="entry name" value="EGF_Ca-bd_CS"/>
</dbReference>
<dbReference type="InterPro" id="IPR050691">
    <property type="entry name" value="Hyaluronan_bind_Proteoglycan"/>
</dbReference>
<dbReference type="InterPro" id="IPR007110">
    <property type="entry name" value="Ig-like_dom"/>
</dbReference>
<dbReference type="InterPro" id="IPR036179">
    <property type="entry name" value="Ig-like_dom_sf"/>
</dbReference>
<dbReference type="InterPro" id="IPR013783">
    <property type="entry name" value="Ig-like_fold"/>
</dbReference>
<dbReference type="InterPro" id="IPR003599">
    <property type="entry name" value="Ig_sub"/>
</dbReference>
<dbReference type="InterPro" id="IPR013106">
    <property type="entry name" value="Ig_V-set"/>
</dbReference>
<dbReference type="InterPro" id="IPR000538">
    <property type="entry name" value="Link_dom"/>
</dbReference>
<dbReference type="InterPro" id="IPR035976">
    <property type="entry name" value="Sushi/SCR/CCP_sf"/>
</dbReference>
<dbReference type="InterPro" id="IPR000436">
    <property type="entry name" value="Sushi_SCR_CCP_dom"/>
</dbReference>
<dbReference type="PANTHER" id="PTHR22804">
    <property type="entry name" value="AGGRECAN/VERSICAN PROTEOGLYCAN"/>
    <property type="match status" value="1"/>
</dbReference>
<dbReference type="PANTHER" id="PTHR22804:SF6">
    <property type="entry name" value="VERSICAN CORE PROTEIN"/>
    <property type="match status" value="1"/>
</dbReference>
<dbReference type="Pfam" id="PF00008">
    <property type="entry name" value="EGF"/>
    <property type="match status" value="2"/>
</dbReference>
<dbReference type="Pfam" id="PF00059">
    <property type="entry name" value="Lectin_C"/>
    <property type="match status" value="1"/>
</dbReference>
<dbReference type="Pfam" id="PF00084">
    <property type="entry name" value="Sushi"/>
    <property type="match status" value="1"/>
</dbReference>
<dbReference type="Pfam" id="PF07686">
    <property type="entry name" value="V-set"/>
    <property type="match status" value="1"/>
</dbReference>
<dbReference type="Pfam" id="PF00193">
    <property type="entry name" value="Xlink"/>
    <property type="match status" value="2"/>
</dbReference>
<dbReference type="PRINTS" id="PR01265">
    <property type="entry name" value="LINKMODULE"/>
</dbReference>
<dbReference type="SMART" id="SM00032">
    <property type="entry name" value="CCP"/>
    <property type="match status" value="1"/>
</dbReference>
<dbReference type="SMART" id="SM00034">
    <property type="entry name" value="CLECT"/>
    <property type="match status" value="1"/>
</dbReference>
<dbReference type="SMART" id="SM00181">
    <property type="entry name" value="EGF"/>
    <property type="match status" value="2"/>
</dbReference>
<dbReference type="SMART" id="SM00179">
    <property type="entry name" value="EGF_CA"/>
    <property type="match status" value="2"/>
</dbReference>
<dbReference type="SMART" id="SM00409">
    <property type="entry name" value="IG"/>
    <property type="match status" value="1"/>
</dbReference>
<dbReference type="SMART" id="SM00445">
    <property type="entry name" value="LINK"/>
    <property type="match status" value="2"/>
</dbReference>
<dbReference type="SUPFAM" id="SSF56436">
    <property type="entry name" value="C-type lectin-like"/>
    <property type="match status" value="3"/>
</dbReference>
<dbReference type="SUPFAM" id="SSF57535">
    <property type="entry name" value="Complement control module/SCR domain"/>
    <property type="match status" value="1"/>
</dbReference>
<dbReference type="SUPFAM" id="SSF57196">
    <property type="entry name" value="EGF/Laminin"/>
    <property type="match status" value="1"/>
</dbReference>
<dbReference type="SUPFAM" id="SSF48726">
    <property type="entry name" value="Immunoglobulin"/>
    <property type="match status" value="1"/>
</dbReference>
<dbReference type="PROSITE" id="PS00010">
    <property type="entry name" value="ASX_HYDROXYL"/>
    <property type="match status" value="1"/>
</dbReference>
<dbReference type="PROSITE" id="PS00615">
    <property type="entry name" value="C_TYPE_LECTIN_1"/>
    <property type="match status" value="1"/>
</dbReference>
<dbReference type="PROSITE" id="PS50041">
    <property type="entry name" value="C_TYPE_LECTIN_2"/>
    <property type="match status" value="1"/>
</dbReference>
<dbReference type="PROSITE" id="PS00022">
    <property type="entry name" value="EGF_1"/>
    <property type="match status" value="2"/>
</dbReference>
<dbReference type="PROSITE" id="PS01186">
    <property type="entry name" value="EGF_2"/>
    <property type="match status" value="1"/>
</dbReference>
<dbReference type="PROSITE" id="PS50026">
    <property type="entry name" value="EGF_3"/>
    <property type="match status" value="2"/>
</dbReference>
<dbReference type="PROSITE" id="PS01187">
    <property type="entry name" value="EGF_CA"/>
    <property type="match status" value="1"/>
</dbReference>
<dbReference type="PROSITE" id="PS50835">
    <property type="entry name" value="IG_LIKE"/>
    <property type="match status" value="1"/>
</dbReference>
<dbReference type="PROSITE" id="PS01241">
    <property type="entry name" value="LINK_1"/>
    <property type="match status" value="2"/>
</dbReference>
<dbReference type="PROSITE" id="PS50963">
    <property type="entry name" value="LINK_2"/>
    <property type="match status" value="2"/>
</dbReference>
<dbReference type="PROSITE" id="PS50923">
    <property type="entry name" value="SUSHI"/>
    <property type="match status" value="1"/>
</dbReference>
<sequence length="3396" mass="372820">MFINIKSILWMCSTLIVTHALHKVKVGKSPPVRGSLSGKVSLPCHFSTMPTLPPSYNTSEFLRIKWSKIEVDKNGKDLKETTVLVAQNGNIKIGQDYKGRVSVPTHPEAVGDASLTVVKLLASDAGLYRCDVMYGIEDTQDTVSLTVDGVVFHYRAATSRYTLNFEAAQKACLDVGAVIATPEQLFAAYEDGFEQCDAGWLADQTVRYPIRAPRVGCYGDKMGKAGVRTYGFRSPQETYDVYCYVDHLDGDVFHLTVPSKFTFEEAAKECENQDARLATVGELQAAWRNGFDQCDYGWLSDASVRHPVTVARAQCGGGLLGVRTLYRFENQTGFPPPDSRFDAYCFKPKEATTIDLSILAETASPSLSKEPQMVSDRTTPIIPLVDELPVIPTEFPPVGNIVSFEQKATVQPQAITDSLATKLPTPTGSTKKPWDMDDYSPSASGPLGKLDISEIKEEVLQSTTGVSHYATDSWDGVVEDKQTQESVTQIEQIEVGPLVTSMEILKHIPSKEFPVTETPLVTARMILESKTEKKMVSTVSELVTTGHYGFTLGEEDDEDRTLTVGSDESTLIFDQIPEVITVSKTSEDTIHTHLEDLESVSASTTVSPLIMPDNNGSSMDDWEERQTSGRITEEFLGKYLSTTPFPSQHRTEIELFPYSGDKILVEGISTVIYPSLQTEMTHRRERTETLIPEMRTDTYTDEIQEEITKSPFMGKTEEEVFSGMKLSTSLSEPIHVTESSVEMTKSFDFPTLITKLSAEPTEVRDMEEDFTATPGTTKYDENITTVLLAHGTLSVEAATVSKWSWDEDNTTSKPLESTEPSASSKLPPALLTTVGMNGKDKDIPSFTEDGADEFTLIPDSTQKQLEEVTDEDIAAHGKFTIRFQPTTSTGIAEKSTLRDSTTEEKVPPITSTEGQVYATMEGSALGEVEDVDLSKPVSTVPQFAHTSEVEGLAFVSYSSTQEPTTYVDSSHTIPLSVIPKTDWGVLVPSVPSEDEVLGEPSQDILVIDQTRLEATISPETMRTTKITEGTTQEEFPWKEQTAEKPVPALSSTAWTPKEAVTPLDEQEGDGSAYTVSEDELLTGSERVPVLETTPVGKIDHSVSYPPGAVTEHKVKTDEVVTLTPRIGPKVSLSPGPEQKYETEGSSTTGFTSSLSPFSTHITQLMEETTTEKTSLEDIDLGSGLFEKPKATELIEFSTIKVTVPSDITTAFSSVDRLHTTSAFKPSSAITKKPPLIDREPGEETTSDMVIIGESTSHVPPTTLEDIVAKETETDIDREYFTTSSPPATQPTRPPTVEDKEAFGPQALSTPQPPASTKFHPDINVYIIEVRENKTGRMSDLSVIGHPIDSESKEDEPCSEETDPVHDLMAEILPEFPDIIEIDLYHSEENEEEEEECANATDVTTTPSVQYINGKHLVTTVPKDPEAAEARRGQFESVAPSQNFSDSSESDTHPFVIAKTELSTAVQPNESTETTESLEVTWKPETYPETSEHFSGGEPDVFPTVPFHEEFESGTAKKGAESVTERDTEVGHQAHEHTEPVSLFPEESSGEIAIDQESQKIAFARATEVTFGEEVEKSTSVTYTPTIVPSSASAYVSEEEAVTLIGNPWPDDLLSTKESWVEATPRQVVELSGSSSIPITEGSGEAEEDEDTMFTMVTDLSQRNTTDTLITLDTSRIITESFFEVPATTIYPVSEQPSAKVVPTKFVSETDTSEWISSTTVEEKKRKEEEGTTGTASTFEVYSSTQRSDQLILPFELESPNVATSSDSGTRKSFMSLTTPTQSEREMTDSTPVFTETNTLENLGAQTTEHSSIHQPGVQEGLTTLPRSPASVFMEQGSGEAAADPETTTVSSFSLNVEYAIQAEKEVAGTLSPHVETTFSTEPTGLVLSTVMDRVVAENITQTSREIVISERLGEPNYGAEIRGFSTGFPLEEDFSGDFREYSTVSHPIAKEETVMMEGSGDAAFRDTQTSPSTVPTSVHISHISDSEGPSSTMVSTSAFPWEEFTSSAEGSGEQLVTVSSSVVPVLPSAVQKFSGTASSIIDEGLGEVGTVNEIDRRSTILPTAEVEGTKAPVEKEEVKVSGTVSTNFPQTIEPAKLWSRQEVNPVRQEIESETTSEEQIQEEKSFESPQNSPATEQTIFDSQTFTETELKTTDYSVLTTKKTYSDDKEMKEEDTSLVNMSTPDPDANGLESYTTLPEATEKSHFFLATALVTESIPAEHVVTDSPIKKEESTKHFPKGMRPTIQESDTELLFSGLGSGEEVLPTLPTESVNFTEVEQINNTLYPHTSQVESTSSDKIEDFNRMENVAKEVGPLVSQTDIFEGSGSVTSTTLIEILSDTGAEGPTVAPLPFSTDIGHPQNQTVRWAEEIQTSRPQTITEQDSNKNSSTAEINETTTSSTDFLARAYGFEMAKEFVTSAPKPSDLYYEPSGEGSGEVDIVDSFHTSATTQATRQESSTTFVSDGSLEKHPEVPSAKAVTADGFPTVSVMLPLHSEQNKSSPDPTSTLSNTVSYERSTDGSFQDRFREFEDSTLKPNRKKPTENIIIDLDKEDKDLILTITESTILEILPELTSDKNTIIDIDHTKPVYEDILGMQTDIDTEVPSEPHDSNDESNDDSTQVQEIYEAAVNLSLTEETFEGSADVLASYTQATHDESMTYEDRSQLDHMGFHFTTGIPAPSTETELDVLLPTATSLPIPRKSATVIPEIEGIKAEAKALDDMFESSTLSDGQAIADQSEIIPTLGQFERTQEEYEDKKHAGPSFQPEFSSGAEEALVDHTPYLSIATTHLMDQSVTEVPDVMEGSNPPYYTDTTLAVSTFAKLSSQTPSSPLTIYSGSEASGHTEIPQPSALPGIDVGSSVMSPQDSFKEIHVNIEATFKPSSEEYLHITEPPSLSPDTKLEPSEDDGKPELLEEMEASPTELIAVEGTEILQDFQNKTDGQVSGEAIKMFPTIKTPEAGTVITTADEIELEGATQWPHSTSASATYGVEAGVVPWLSPQTSERPTLSSSPEINPETQAALIRGQDSTIAASEQQVAARILDSNDQATVNPVEFNTEVATPPFSLLETSNETDFLIGINEESVEGTAIYLPGPDRCKMNPCLNGGTCYPTETSYVCTCVPGYSGDQCELDFDECHSNPCRNGATCVDGFNTFRCLCLPSYVGALCEQDTETCDYGWHKFQGQCYKYFAHRRTWDAAERECRLQGAHLTSILSHEEQMFVNRVGHDYQWIGLNDKMFEHDFRWTDGSTLQYENWRPNQPDSFFSAGEDCVVIIWHENGQWNDVPCNYHLTYTCKKGTVACGQPPVVENAKTFGKMKPRYEINSLIRYHCKDGFIQRHLPTIRCLGNGRWAIPKITCMNPSAYQRTYSMKYFKNSSSAKDNSINTSKHDHRWSRRWQESRR</sequence>
<protein>
    <recommendedName>
        <fullName>Versican core protein</fullName>
    </recommendedName>
    <alternativeName>
        <fullName>Chondroitin sulfate proteoglycan core protein 2</fullName>
        <shortName>Chondroitin sulfate proteoglycan 2</shortName>
    </alternativeName>
    <alternativeName>
        <fullName>Glial hyaluronate-binding protein</fullName>
        <shortName>GHAP</shortName>
    </alternativeName>
    <alternativeName>
        <fullName>Large fibroblast proteoglycan</fullName>
    </alternativeName>
    <alternativeName>
        <fullName>PG-M</fullName>
    </alternativeName>
</protein>
<keyword id="KW-0025">Alternative splicing</keyword>
<keyword id="KW-0106">Calcium</keyword>
<keyword id="KW-0898">Cataract</keyword>
<keyword id="KW-0966">Cell projection</keyword>
<keyword id="KW-0903">Direct protein sequencing</keyword>
<keyword id="KW-1015">Disulfide bond</keyword>
<keyword id="KW-0245">EGF-like domain</keyword>
<keyword id="KW-0272">Extracellular matrix</keyword>
<keyword id="KW-0325">Glycoprotein</keyword>
<keyword id="KW-0373">Hyaluronic acid</keyword>
<keyword id="KW-0393">Immunoglobulin domain</keyword>
<keyword id="KW-0430">Lectin</keyword>
<keyword id="KW-0597">Phosphoprotein</keyword>
<keyword id="KW-0654">Proteoglycan</keyword>
<keyword id="KW-1267">Proteomics identification</keyword>
<keyword id="KW-1185">Reference proteome</keyword>
<keyword id="KW-0677">Repeat</keyword>
<keyword id="KW-0964">Secreted</keyword>
<keyword id="KW-0732">Signal</keyword>
<keyword id="KW-0768">Sushi</keyword>
<gene>
    <name type="primary">VCAN</name>
    <name type="synonym">CSPG2</name>
</gene>
<proteinExistence type="evidence at protein level"/>
<reference key="1">
    <citation type="journal article" date="1989" name="EMBO J.">
        <title>Multiple domains of the large fibroblast proteoglycan, versican.</title>
        <authorList>
            <person name="Zimmermann D.R."/>
            <person name="Ruoslahti E."/>
        </authorList>
    </citation>
    <scope>NUCLEOTIDE SEQUENCE [MRNA] (ISOFORM V1)</scope>
    <scope>SUBCELLULAR LOCATION</scope>
    <source>
        <tissue>Placenta</tissue>
    </source>
</reference>
<reference key="2">
    <citation type="journal article" date="1994" name="J. Biol. Chem.">
        <title>A novel glycosaminoglycan attachment domain identified in two alternative splice variants of human versican.</title>
        <authorList>
            <person name="Dours-Zimmermann M.T."/>
            <person name="Zimmermann D.R."/>
        </authorList>
    </citation>
    <scope>NUCLEOTIDE SEQUENCE [MRNA] (ISOFORM V2)</scope>
    <source>
        <tissue>Glial tumor</tissue>
    </source>
</reference>
<reference key="3">
    <citation type="journal article" date="1994" name="J. Biol. Chem.">
        <title>Characterization of the complete genomic structure of the human versican gene and functional analysis of its promoter.</title>
        <authorList>
            <person name="Naso M.F."/>
            <person name="Zimmermann D.R."/>
            <person name="Iozzo R.V."/>
        </authorList>
    </citation>
    <scope>NUCLEOTIDE SEQUENCE [GENOMIC DNA] (ISOFORM V0)</scope>
</reference>
<reference key="4">
    <citation type="journal article" date="1995" name="J. Biol. Chem.">
        <title>Expression of PG-M(V3), an alternatively spliced form of PG-M without a chondroitin sulfate attachment in region in mouse and human tissues.</title>
        <authorList>
            <person name="Zako M."/>
            <person name="Shinomura T."/>
            <person name="Ujita M."/>
            <person name="Ito K."/>
            <person name="Kimata K."/>
        </authorList>
    </citation>
    <scope>NUCLEOTIDE SEQUENCE [MRNA] (ISOFORM V3)</scope>
    <source>
        <tissue>Brain</tissue>
    </source>
</reference>
<reference key="5">
    <citation type="journal article" date="1994" name="Matrix Biol.">
        <title>Identification of the proteoglycan versican in aorta and smooth muscle cells by DNA sequence analysis, in situ hybridization and immunohistochemistry.</title>
        <authorList>
            <person name="Yao L.Y."/>
            <person name="Moody C."/>
            <person name="Schoenherr E."/>
            <person name="Wight T.N."/>
            <person name="Sandell L.J."/>
        </authorList>
    </citation>
    <scope>NUCLEOTIDE SEQUENCE [MRNA] OF 208-1427; 2081-2372 AND 2897-3233 (ISOFORM V1)</scope>
    <scope>DEVELOPMENTAL STAGE</scope>
</reference>
<reference key="6">
    <citation type="journal article" date="1992" name="Genomics">
        <title>Mapping of the versican proteoglycan gene (CSPG2) to the long arm of human chromosome 5 (5q12-5q14).</title>
        <authorList>
            <person name="Iozzo R.V."/>
            <person name="Naso M.F."/>
            <person name="Cannizzaro L.A."/>
            <person name="Wasmuth J.J."/>
            <person name="McPherson J.D."/>
        </authorList>
    </citation>
    <scope>NUCLEOTIDE SEQUENCE [GENOMIC DNA] OF 251-347</scope>
</reference>
<reference key="7">
    <citation type="journal article" date="1987" name="J. Biol. Chem.">
        <title>A fibroblast chondroitin sulfate proteoglycan core protein contains lectin-like and growth factor-like sequences.</title>
        <authorList>
            <person name="Krusius T."/>
            <person name="Gehlsen K.R."/>
            <person name="Ruoslahti E."/>
        </authorList>
    </citation>
    <scope>NUCLEOTIDE SEQUENCE [MRNA] OF 2709-3396</scope>
    <source>
        <tissue>Lung fibroblast</tissue>
    </source>
</reference>
<reference key="8">
    <citation type="journal article" date="1999" name="Arterioscler. Thromb. Vasc. Biol.">
        <title>Versican/PG-M isoforms in vascular smooth muscle cells.</title>
        <authorList>
            <person name="Lemire J.M."/>
            <person name="Braun K.R."/>
            <person name="Maurel P."/>
            <person name="Kaplan E.D."/>
            <person name="Schwartz S.M."/>
            <person name="Wight T.N."/>
        </authorList>
    </citation>
    <scope>NUCLEOTIDE SEQUENCE [MRNA] OF 3333-3396 (ISOFORM VINT)</scope>
    <source>
        <tissue>Aortic smooth muscle</tissue>
    </source>
</reference>
<reference key="9">
    <citation type="journal article" date="1992" name="J. Biol. Chem.">
        <title>Isolation of a large aggregating proteoglycan from human brain.</title>
        <authorList>
            <person name="Perides G."/>
            <person name="Rahemtulla F."/>
            <person name="Lane W.S."/>
            <person name="Asher R.A."/>
            <person name="Bignami A."/>
        </authorList>
    </citation>
    <scope>PROTEIN SEQUENCE OF 21-37</scope>
</reference>
<reference key="10">
    <citation type="journal article" date="1989" name="J. Biol. Chem.">
        <title>Isolation and partial characterization of a glial hyaluronate-binding protein.</title>
        <authorList>
            <person name="Perides G."/>
            <person name="Lane W.S."/>
            <person name="Andrews D."/>
            <person name="Dahl D."/>
            <person name="Bignami A."/>
        </authorList>
    </citation>
    <scope>PROTEIN SEQUENCE OF 24-50; 80-119; 128-155; 167-218; 229-268 AND 277-290</scope>
    <source>
        <tissue>Brain</tissue>
    </source>
</reference>
<reference key="11">
    <citation type="journal article" date="1989" name="Brain Res. Bull.">
        <title>Structural similarity of hyaluronate binding proteins in brain and cartilage.</title>
        <authorList>
            <person name="Bignami A."/>
            <person name="Lane W.S."/>
            <person name="Andrews D."/>
            <person name="Dahl D."/>
        </authorList>
    </citation>
    <scope>PROTEIN SEQUENCE OF 171-210 AND 289-303</scope>
    <scope>TISSUE SPECIFICITY</scope>
</reference>
<reference key="12">
    <citation type="journal article" date="1996" name="J. Neuropathol. Exp. Neurol.">
        <title>Differential expression of versican isoforms in brain tumors.</title>
        <authorList>
            <person name="Paulus W."/>
            <person name="Baur I."/>
            <person name="Dours-Zimmermann M.T."/>
            <person name="Zimmermann D.R."/>
        </authorList>
    </citation>
    <scope>TISSUE SPECIFICITY (ISOFORMS V0; V1; V2 AND V3)</scope>
</reference>
<reference key="13">
    <citation type="journal article" date="2005" name="Invest. Ophthalmol. Vis. Sci.">
        <title>Identification of a novel splice site mutation of the CSPG2 gene in a Japanese family with Wagner syndrome.</title>
        <authorList>
            <person name="Miyamoto T."/>
            <person name="Inoue H."/>
            <person name="Sakamoto Y."/>
            <person name="Kudo E."/>
            <person name="Naito T."/>
            <person name="Mikawa T."/>
            <person name="Mikawa Y."/>
            <person name="Isashiki Y."/>
            <person name="Osabe D."/>
            <person name="Shinohara S."/>
            <person name="Shiota H."/>
            <person name="Itakura M."/>
        </authorList>
    </citation>
    <scope>INVOLVEMENT IN WGVRP</scope>
</reference>
<reference key="14">
    <citation type="journal article" date="2011" name="BMC Syst. Biol.">
        <title>Initial characterization of the human central proteome.</title>
        <authorList>
            <person name="Burkard T.R."/>
            <person name="Planyavsky M."/>
            <person name="Kaupe I."/>
            <person name="Breitwieser F.P."/>
            <person name="Buerckstuemmer T."/>
            <person name="Bennett K.L."/>
            <person name="Superti-Furga G."/>
            <person name="Colinge J."/>
        </authorList>
    </citation>
    <scope>IDENTIFICATION BY MASS SPECTROMETRY [LARGE SCALE ANALYSIS]</scope>
</reference>
<reference key="15">
    <citation type="journal article" date="2013" name="Eur. J. Hum. Genet.">
        <title>Novel VCAN mutations and evidence for unbalanced alternative splicing in the pathogenesis of Wagner syndrome.</title>
        <authorList>
            <person name="Kloeckener-Gruissem B."/>
            <person name="Neidhardt J."/>
            <person name="Magyar I."/>
            <person name="Plauchu H."/>
            <person name="Zech J.C."/>
            <person name="Morle L."/>
            <person name="Palmer-Smith S.M."/>
            <person name="Macdonald M.J."/>
            <person name="Nas V."/>
            <person name="Fry A.E."/>
            <person name="Berger W."/>
        </authorList>
    </citation>
    <scope>INVOLVEMENT IN WGVRP</scope>
    <scope>PATHOLOGICAL MECHANISM</scope>
</reference>
<reference key="16">
    <citation type="journal article" date="2014" name="J. Proteomics">
        <title>An enzyme assisted RP-RPLC approach for in-depth analysis of human liver phosphoproteome.</title>
        <authorList>
            <person name="Bian Y."/>
            <person name="Song C."/>
            <person name="Cheng K."/>
            <person name="Dong M."/>
            <person name="Wang F."/>
            <person name="Huang J."/>
            <person name="Sun D."/>
            <person name="Wang L."/>
            <person name="Ye M."/>
            <person name="Zou H."/>
        </authorList>
    </citation>
    <scope>PHOSPHORYLATION [LARGE SCALE ANALYSIS] AT SER-2116 AND THR-2617</scope>
    <scope>IDENTIFICATION BY MASS SPECTROMETRY [LARGE SCALE ANALYSIS]</scope>
    <source>
        <tissue>Liver</tissue>
    </source>
</reference>
<reference key="17">
    <citation type="journal article" date="2015" name="Cell">
        <title>A single kinase generates the majority of the secreted phosphoproteome.</title>
        <authorList>
            <person name="Tagliabracci V.S."/>
            <person name="Wiley S.E."/>
            <person name="Guo X."/>
            <person name="Kinch L.N."/>
            <person name="Durrant E."/>
            <person name="Wen J."/>
            <person name="Xiao J."/>
            <person name="Cui J."/>
            <person name="Nguyen K.B."/>
            <person name="Engel J.L."/>
            <person name="Coon J.J."/>
            <person name="Grishin N."/>
            <person name="Pinna L.A."/>
            <person name="Pagliarini D.J."/>
            <person name="Dixon J.E."/>
        </authorList>
    </citation>
    <scope>PHOSPHORYLATION AT SER-2116</scope>
</reference>
<reference key="18">
    <citation type="journal article" date="2015" name="Mol. Cell. Proteomics">
        <title>Identification of chondroitin sulfate linkage region glycopeptides reveals prohormones as a novel class of proteoglycans.</title>
        <authorList>
            <person name="Noborn F."/>
            <person name="Gomez Toledo A."/>
            <person name="Sihlbom C."/>
            <person name="Lengqvist J."/>
            <person name="Fries E."/>
            <person name="Kjellen L."/>
            <person name="Nilsson J."/>
            <person name="Larson G."/>
        </authorList>
    </citation>
    <scope>SUBCELLULAR LOCATION</scope>
    <scope>TISSUE SPECIFICITY</scope>
    <scope>GLYCOSYLATION AT SER-1548</scope>
</reference>
<reference key="19">
    <citation type="journal article" date="2018" name="Acta Biomater.">
        <title>Extracellular matrix component expression in human pluripotent stem cell-derived retinal organoids recapitulates retinogenesis in vivo and reveals an important role for IMPG1 and CD44 in the development of photoreceptors and interphotoreceptor matrix.</title>
        <authorList>
            <person name="Felemban M."/>
            <person name="Dorgau B."/>
            <person name="Hunt N.C."/>
            <person name="Hallam D."/>
            <person name="Zerti D."/>
            <person name="Bauer R."/>
            <person name="Ding Y."/>
            <person name="Collin J."/>
            <person name="Steel D."/>
            <person name="Krasnogor N."/>
            <person name="Al-Aama J."/>
            <person name="Lindsay S."/>
            <person name="Mellough C."/>
            <person name="Lako M."/>
        </authorList>
    </citation>
    <scope>SUBCELLULAR LOCATION</scope>
    <scope>TISSUE SPECIFICITY</scope>
    <scope>DEVELOPMENTAL STAGE</scope>
</reference>
<reference key="20">
    <citation type="journal article" date="2020" name="Glycobiology">
        <title>An affinity chromatography and glycoproteomics workflow to profile the chondroitin sulfate proteoglycans that interact with malarial VAR2CSA in the placenta and in cancer.</title>
        <authorList>
            <person name="Toledo A.G."/>
            <person name="Pihl J."/>
            <person name="Spliid C.B."/>
            <person name="Persson A."/>
            <person name="Nilsson J."/>
            <person name="Pereira M.A."/>
            <person name="Gustavsson T."/>
            <person name="Choudhary S."/>
            <person name="Oo H.Z."/>
            <person name="Black P.C."/>
            <person name="Daugaard M."/>
            <person name="Esko J.D."/>
            <person name="Larson G."/>
            <person name="Salanti A."/>
            <person name="Clausen T.M."/>
        </authorList>
    </citation>
    <scope>TISSUE SPECIFICITY</scope>
    <scope>GLYCOSYLATION AT SER-659; SER-1548; SER-1631; SER-1959; SER-2247 AND SER-2767</scope>
</reference>
<reference key="21">
    <citation type="journal article" date="2022" name="J. Proteins Proteom.">
        <title>Mass spectrometric analysis of chondroitin sulfate-linked peptides.</title>
        <authorList>
            <person name="Ramarajan M.G."/>
            <person name="Saraswat M."/>
            <person name="Budhraja R."/>
            <person name="Garapati K."/>
            <person name="Raymond K."/>
            <person name="Pandey A."/>
        </authorList>
    </citation>
    <scope>TISSUE SPECIFICITY</scope>
    <scope>GLYCOSYLATION AT SER-1548; SER-1631; SER-1935; SER-1959; SER-2254; SER-2723 AND SER-2941</scope>
</reference>
<accession>P13611</accession>
<accession>P20754</accession>
<accession>Q13010</accession>
<accession>Q13189</accession>
<accession>Q15123</accession>
<accession>Q9UCL9</accession>
<accession>Q9UNW5</accession>
<organism>
    <name type="scientific">Homo sapiens</name>
    <name type="common">Human</name>
    <dbReference type="NCBI Taxonomy" id="9606"/>
    <lineage>
        <taxon>Eukaryota</taxon>
        <taxon>Metazoa</taxon>
        <taxon>Chordata</taxon>
        <taxon>Craniata</taxon>
        <taxon>Vertebrata</taxon>
        <taxon>Euteleostomi</taxon>
        <taxon>Mammalia</taxon>
        <taxon>Eutheria</taxon>
        <taxon>Euarchontoglires</taxon>
        <taxon>Primates</taxon>
        <taxon>Haplorrhini</taxon>
        <taxon>Catarrhini</taxon>
        <taxon>Hominidae</taxon>
        <taxon>Homo</taxon>
    </lineage>
</organism>
<comment type="function">
    <text>May play a role in intercellular signaling and in connecting cells with the extracellular matrix. May take part in the regulation of cell motility, growth and differentiation. Binds hyaluronic acid.</text>
</comment>
<comment type="subunit">
    <text evidence="1">Interacts with FBLN1.</text>
</comment>
<comment type="interaction">
    <interactant intactId="EBI-8515977">
        <id>P13611</id>
    </interactant>
    <interactant intactId="EBI-1382326">
        <id>P14780</id>
        <label>MMP9</label>
    </interactant>
    <organismsDiffer>false</organismsDiffer>
    <experiments>3</experiments>
</comment>
<comment type="subcellular location">
    <subcellularLocation>
        <location evidence="26">Secreted</location>
        <location evidence="26">Extracellular space</location>
        <location evidence="26">Extracellular matrix</location>
    </subcellularLocation>
    <subcellularLocation>
        <location evidence="15">Cell projection</location>
        <location evidence="15">Cilium</location>
        <location evidence="15">Photoreceptor outer segment</location>
    </subcellularLocation>
    <subcellularLocation>
        <location evidence="15">Secreted</location>
        <location evidence="15">Extracellular space</location>
        <location evidence="15">Extracellular matrix</location>
        <location evidence="15">Interphotoreceptor matrix</location>
    </subcellularLocation>
    <subcellularLocation>
        <location evidence="13">Secreted</location>
    </subcellularLocation>
</comment>
<comment type="alternative products">
    <event type="alternative splicing"/>
    <isoform>
        <id>P13611-1</id>
        <name>V0</name>
        <sequence type="displayed"/>
    </isoform>
    <isoform>
        <id>P13611-2</id>
        <name>V1</name>
        <sequence type="described" ref="VSP_003082 VSP_003083"/>
    </isoform>
    <isoform>
        <id>P13611-3</id>
        <name>V2</name>
        <sequence type="described" ref="VSP_003084"/>
    </isoform>
    <isoform>
        <id>P13611-4</id>
        <name>V3</name>
        <sequence type="described" ref="VSP_003082 VSP_003085"/>
    </isoform>
    <isoform>
        <id>P13611-5</id>
        <name>Vint</name>
        <sequence type="described" ref="VSP_003086"/>
    </isoform>
    <text>Additional isoforms seem to exist.</text>
</comment>
<comment type="tissue specificity">
    <text evidence="12 13 15 16 17 19">Detected in placenta (at protein level) (PubMed:32337544). Detected in cerebrospinal fluid, fibroblasts and urine (at protein level) (PubMed:25326458, PubMed:36213313). Expressed in the retina (at protein level) (PubMed:29777959). Cerebral white matter and plasma (PubMed:2469524). Isoform V0: Expressed in normal brain, gliomas, medulloblastomas, schwannomas, neurofibromas, and meningiomas (PubMed:8627343). Isoform V1: Expressed in normal brain, gliomas, medulloblastomas, schwannomas, neurofibromas, and meningiomas (PubMed:8627343). Isoform V2: Restricted to normal brain and gliomas (PubMed:8627343). Isoform V3: Found in all these tissues except medulloblastomas (PubMed:8627343).</text>
</comment>
<comment type="developmental stage">
    <text evidence="15 18">Expressed in developing photoreceptors and the interphotoreceptor matrix between 12 and 17 weeks post conception (at protein level) (PubMed:29777959). Disappears in aorta after the cartilage development (PubMed:7921538).</text>
</comment>
<comment type="PTM">
    <text evidence="14">Phosphorylated by FAM20C in the extracellular medium.</text>
</comment>
<comment type="PTM">
    <text evidence="2">Proteolytically cleaved by ADAMTS5 and ADAMTS15 in the pericellular matrix surrounding myoblasts, facilitating myoblast contact and fusion which is required for skeletal muscle development and regeneration.</text>
</comment>
<comment type="disease" evidence="10 11">
    <disease id="DI-02416">
        <name>Wagner vitreoretinopathy</name>
        <acronym>WGVRP</acronym>
        <description>A rare vitreoretinopathy characterized by an optically empty vitreous cavity with fibrillary condensations and a preretinal avascular membrane. Other optical features include progressive chorioretinal atrophy, perivascular sheating, subcapsular cataract and myopia.</description>
        <dbReference type="MIM" id="143200"/>
    </disease>
    <text evidence="11">The disease is caused by variants affecting the gene represented in this entry. The pathological mechanism involves a quantitative imbalance of the normally occurring splice variants (PubMed:22739342).</text>
</comment>
<comment type="similarity">
    <text evidence="25">Belongs to the aggrecan/versican proteoglycan family.</text>
</comment>
<comment type="online information" name="Functional Glycomics Gateway - Glycan Binding">
    <link uri="http://www.functionalglycomics.org/glycomics/GBPServlet?&amp;operationType=view&amp;cbpId=cbp_hum_Ctlect_214"/>
    <text>Versican</text>
</comment>
<comment type="online information" name="Atlas of Genetics and Cytogenetics in Oncology and Haematology">
    <link uri="https://atlasgeneticsoncology.org/gene/40173/VCAN"/>
</comment>